<keyword id="KW-1003">Cell membrane</keyword>
<keyword id="KW-0472">Membrane</keyword>
<keyword id="KW-0812">Transmembrane</keyword>
<keyword id="KW-1133">Transmembrane helix</keyword>
<evidence type="ECO:0000255" key="1">
    <source>
        <dbReference type="HAMAP-Rule" id="MF_01361"/>
    </source>
</evidence>
<sequence length="59" mass="6285">MLTWALIFFIIAIIAAAFGFGGIAVAAAGIAKILFFLFLVMFVIFLIMGLVGRRGPPPV</sequence>
<protein>
    <recommendedName>
        <fullName evidence="1">UPF0391 membrane protein lpp2589</fullName>
    </recommendedName>
</protein>
<reference key="1">
    <citation type="journal article" date="2004" name="Nat. Genet.">
        <title>Evidence in the Legionella pneumophila genome for exploitation of host cell functions and high genome plasticity.</title>
        <authorList>
            <person name="Cazalet C."/>
            <person name="Rusniok C."/>
            <person name="Brueggemann H."/>
            <person name="Zidane N."/>
            <person name="Magnier A."/>
            <person name="Ma L."/>
            <person name="Tichit M."/>
            <person name="Jarraud S."/>
            <person name="Bouchier C."/>
            <person name="Vandenesch F."/>
            <person name="Kunst F."/>
            <person name="Etienne J."/>
            <person name="Glaser P."/>
            <person name="Buchrieser C."/>
        </authorList>
    </citation>
    <scope>NUCLEOTIDE SEQUENCE [LARGE SCALE GENOMIC DNA]</scope>
    <source>
        <strain>Paris</strain>
    </source>
</reference>
<name>Y2589_LEGPA</name>
<gene>
    <name type="ordered locus">lpp2589</name>
</gene>
<accession>Q5X204</accession>
<proteinExistence type="inferred from homology"/>
<feature type="chain" id="PRO_0000256744" description="UPF0391 membrane protein lpp2589">
    <location>
        <begin position="1"/>
        <end position="59"/>
    </location>
</feature>
<feature type="transmembrane region" description="Helical" evidence="1">
    <location>
        <begin position="5"/>
        <end position="25"/>
    </location>
</feature>
<feature type="transmembrane region" description="Helical" evidence="1">
    <location>
        <begin position="30"/>
        <end position="50"/>
    </location>
</feature>
<organism>
    <name type="scientific">Legionella pneumophila (strain Paris)</name>
    <dbReference type="NCBI Taxonomy" id="297246"/>
    <lineage>
        <taxon>Bacteria</taxon>
        <taxon>Pseudomonadati</taxon>
        <taxon>Pseudomonadota</taxon>
        <taxon>Gammaproteobacteria</taxon>
        <taxon>Legionellales</taxon>
        <taxon>Legionellaceae</taxon>
        <taxon>Legionella</taxon>
    </lineage>
</organism>
<comment type="subcellular location">
    <subcellularLocation>
        <location evidence="1">Cell membrane</location>
        <topology evidence="1">Multi-pass membrane protein</topology>
    </subcellularLocation>
</comment>
<comment type="similarity">
    <text evidence="1">Belongs to the UPF0391 family.</text>
</comment>
<dbReference type="EMBL" id="CR628336">
    <property type="protein sequence ID" value="CAH13742.1"/>
    <property type="molecule type" value="Genomic_DNA"/>
</dbReference>
<dbReference type="RefSeq" id="WP_014842550.1">
    <property type="nucleotide sequence ID" value="NC_006368.1"/>
</dbReference>
<dbReference type="KEGG" id="lpp:lpp2589"/>
<dbReference type="LegioList" id="lpp2589"/>
<dbReference type="HOGENOM" id="CLU_187346_1_0_6"/>
<dbReference type="GO" id="GO:0005886">
    <property type="term" value="C:plasma membrane"/>
    <property type="evidence" value="ECO:0007669"/>
    <property type="project" value="UniProtKB-SubCell"/>
</dbReference>
<dbReference type="HAMAP" id="MF_01361">
    <property type="entry name" value="UPF0391"/>
    <property type="match status" value="1"/>
</dbReference>
<dbReference type="InterPro" id="IPR009760">
    <property type="entry name" value="DUF1328"/>
</dbReference>
<dbReference type="NCBIfam" id="NF010226">
    <property type="entry name" value="PRK13682.1-1"/>
    <property type="match status" value="1"/>
</dbReference>
<dbReference type="NCBIfam" id="NF010229">
    <property type="entry name" value="PRK13682.1-4"/>
    <property type="match status" value="1"/>
</dbReference>
<dbReference type="NCBIfam" id="NF010233">
    <property type="entry name" value="PRK13682.2-4"/>
    <property type="match status" value="1"/>
</dbReference>
<dbReference type="Pfam" id="PF07043">
    <property type="entry name" value="DUF1328"/>
    <property type="match status" value="1"/>
</dbReference>
<dbReference type="PIRSF" id="PIRSF036466">
    <property type="entry name" value="UCP036466"/>
    <property type="match status" value="1"/>
</dbReference>